<comment type="function">
    <text evidence="1">Sigma factors are initiation factors that promote the attachment of RNA polymerase to specific initiation sites and are then released.</text>
</comment>
<comment type="similarity">
    <text evidence="2">Belongs to the sigma-70 factor family. ECF subfamily.</text>
</comment>
<keyword id="KW-0238">DNA-binding</keyword>
<keyword id="KW-0731">Sigma factor</keyword>
<keyword id="KW-0804">Transcription</keyword>
<keyword id="KW-0805">Transcription regulation</keyword>
<organism>
    <name type="scientific">Mycobacterium sp. (strain MCS)</name>
    <dbReference type="NCBI Taxonomy" id="164756"/>
    <lineage>
        <taxon>Bacteria</taxon>
        <taxon>Bacillati</taxon>
        <taxon>Actinomycetota</taxon>
        <taxon>Actinomycetes</taxon>
        <taxon>Mycobacteriales</taxon>
        <taxon>Mycobacteriaceae</taxon>
        <taxon>Mycobacterium</taxon>
    </lineage>
</organism>
<name>SIGK_MYCSS</name>
<gene>
    <name type="primary">sigK</name>
    <name type="ordered locus">Mmcs_4371</name>
</gene>
<accession>Q1B3Q8</accession>
<proteinExistence type="inferred from homology"/>
<reference key="1">
    <citation type="submission" date="2006-06" db="EMBL/GenBank/DDBJ databases">
        <title>Complete sequence of chromosome of Mycobacterium sp. MCS.</title>
        <authorList>
            <consortium name="US DOE Joint Genome Institute"/>
            <person name="Copeland A."/>
            <person name="Lucas S."/>
            <person name="Lapidus A."/>
            <person name="Barry K."/>
            <person name="Detter J.C."/>
            <person name="Glavina del Rio T."/>
            <person name="Hammon N."/>
            <person name="Israni S."/>
            <person name="Dalin E."/>
            <person name="Tice H."/>
            <person name="Pitluck S."/>
            <person name="Martinez M."/>
            <person name="Schmutz J."/>
            <person name="Larimer F."/>
            <person name="Land M."/>
            <person name="Hauser L."/>
            <person name="Kyrpides N."/>
            <person name="Kim E."/>
            <person name="Miller C.D."/>
            <person name="Hughes J.E."/>
            <person name="Anderson A.J."/>
            <person name="Sims R.C."/>
            <person name="Richardson P."/>
        </authorList>
    </citation>
    <scope>NUCLEOTIDE SEQUENCE [LARGE SCALE GENOMIC DNA]</scope>
    <source>
        <strain>MCS</strain>
    </source>
</reference>
<dbReference type="EMBL" id="CP000384">
    <property type="protein sequence ID" value="ABG10476.1"/>
    <property type="molecule type" value="Genomic_DNA"/>
</dbReference>
<dbReference type="SMR" id="Q1B3Q8"/>
<dbReference type="KEGG" id="mmc:Mmcs_4371"/>
<dbReference type="HOGENOM" id="CLU_047691_9_3_11"/>
<dbReference type="BioCyc" id="MSP164756:G1G6O-4467-MONOMER"/>
<dbReference type="GO" id="GO:0003677">
    <property type="term" value="F:DNA binding"/>
    <property type="evidence" value="ECO:0007669"/>
    <property type="project" value="UniProtKB-KW"/>
</dbReference>
<dbReference type="GO" id="GO:0016987">
    <property type="term" value="F:sigma factor activity"/>
    <property type="evidence" value="ECO:0007669"/>
    <property type="project" value="UniProtKB-KW"/>
</dbReference>
<dbReference type="GO" id="GO:0006352">
    <property type="term" value="P:DNA-templated transcription initiation"/>
    <property type="evidence" value="ECO:0007669"/>
    <property type="project" value="InterPro"/>
</dbReference>
<dbReference type="CDD" id="cd06171">
    <property type="entry name" value="Sigma70_r4"/>
    <property type="match status" value="1"/>
</dbReference>
<dbReference type="Gene3D" id="1.10.1740.10">
    <property type="match status" value="1"/>
</dbReference>
<dbReference type="Gene3D" id="1.10.10.10">
    <property type="entry name" value="Winged helix-like DNA-binding domain superfamily/Winged helix DNA-binding domain"/>
    <property type="match status" value="1"/>
</dbReference>
<dbReference type="InterPro" id="IPR039425">
    <property type="entry name" value="RNA_pol_sigma-70-like"/>
</dbReference>
<dbReference type="InterPro" id="IPR014284">
    <property type="entry name" value="RNA_pol_sigma-70_dom"/>
</dbReference>
<dbReference type="InterPro" id="IPR007627">
    <property type="entry name" value="RNA_pol_sigma70_r2"/>
</dbReference>
<dbReference type="InterPro" id="IPR007630">
    <property type="entry name" value="RNA_pol_sigma70_r4"/>
</dbReference>
<dbReference type="InterPro" id="IPR013325">
    <property type="entry name" value="RNA_pol_sigma_r2"/>
</dbReference>
<dbReference type="InterPro" id="IPR013324">
    <property type="entry name" value="RNA_pol_sigma_r3/r4-like"/>
</dbReference>
<dbReference type="InterPro" id="IPR036388">
    <property type="entry name" value="WH-like_DNA-bd_sf"/>
</dbReference>
<dbReference type="NCBIfam" id="NF007228">
    <property type="entry name" value="PRK09646.1"/>
    <property type="match status" value="1"/>
</dbReference>
<dbReference type="NCBIfam" id="TIGR02937">
    <property type="entry name" value="sigma70-ECF"/>
    <property type="match status" value="1"/>
</dbReference>
<dbReference type="PANTHER" id="PTHR43133:SF66">
    <property type="entry name" value="ECF RNA POLYMERASE SIGMA FACTOR SIGK"/>
    <property type="match status" value="1"/>
</dbReference>
<dbReference type="PANTHER" id="PTHR43133">
    <property type="entry name" value="RNA POLYMERASE ECF-TYPE SIGMA FACTO"/>
    <property type="match status" value="1"/>
</dbReference>
<dbReference type="Pfam" id="PF04542">
    <property type="entry name" value="Sigma70_r2"/>
    <property type="match status" value="1"/>
</dbReference>
<dbReference type="Pfam" id="PF04545">
    <property type="entry name" value="Sigma70_r4"/>
    <property type="match status" value="1"/>
</dbReference>
<dbReference type="SUPFAM" id="SSF88946">
    <property type="entry name" value="Sigma2 domain of RNA polymerase sigma factors"/>
    <property type="match status" value="1"/>
</dbReference>
<dbReference type="SUPFAM" id="SSF88659">
    <property type="entry name" value="Sigma3 and sigma4 domains of RNA polymerase sigma factors"/>
    <property type="match status" value="1"/>
</dbReference>
<sequence>MTALTQPVRLPFVTTDLDVLLRQVAERDVDAFAALYDRTRSRVYGMVTRVLRDPGYSEETTQDIYLQVWRSAGSYDPKAGSPMAWLLTLAHRRAVDRVRSEEAASQRESRYGAASVDPPVDHVADSVILLDERRRVVDCMGSLSDLQREAIQLAYYEGLTYVQVSERLSANLATIKSRMRGGIRGLKNCLGMS</sequence>
<protein>
    <recommendedName>
        <fullName>RNA polymerase sigma factor SigK</fullName>
    </recommendedName>
    <alternativeName>
        <fullName>Sigma-K factor</fullName>
    </alternativeName>
</protein>
<feature type="chain" id="PRO_0000313843" description="RNA polymerase sigma factor SigK">
    <location>
        <begin position="1"/>
        <end position="193"/>
    </location>
</feature>
<feature type="DNA-binding region" description="H-T-H motif" evidence="1">
    <location>
        <begin position="161"/>
        <end position="180"/>
    </location>
</feature>
<feature type="short sequence motif" description="Polymerase core binding">
    <location>
        <begin position="59"/>
        <end position="72"/>
    </location>
</feature>
<evidence type="ECO:0000250" key="1"/>
<evidence type="ECO:0000305" key="2"/>